<keyword id="KW-0217">Developmental protein</keyword>
<keyword id="KW-0221">Differentiation</keyword>
<keyword id="KW-0256">Endoplasmic reticulum</keyword>
<keyword id="KW-0472">Membrane</keyword>
<keyword id="KW-0896">Oogenesis</keyword>
<keyword id="KW-1185">Reference proteome</keyword>
<keyword id="KW-0812">Transmembrane</keyword>
<keyword id="KW-1133">Transmembrane helix</keyword>
<evidence type="ECO:0000255" key="1"/>
<evidence type="ECO:0000269" key="2">
    <source>
    </source>
</evidence>
<evidence type="ECO:0000303" key="3">
    <source>
    </source>
</evidence>
<evidence type="ECO:0000305" key="4"/>
<evidence type="ECO:0000305" key="5">
    <source>
    </source>
</evidence>
<evidence type="ECO:0000312" key="6">
    <source>
        <dbReference type="FlyBase" id="FBgn0037374"/>
    </source>
</evidence>
<dbReference type="EMBL" id="AE014297">
    <property type="protein sequence ID" value="AAN14321.1"/>
    <property type="molecule type" value="Genomic_DNA"/>
</dbReference>
<dbReference type="EMBL" id="AY061443">
    <property type="protein sequence ID" value="AAL28991.1"/>
    <property type="molecule type" value="mRNA"/>
</dbReference>
<dbReference type="RefSeq" id="NP_649585.1">
    <property type="nucleotide sequence ID" value="NM_141328.3"/>
</dbReference>
<dbReference type="RefSeq" id="NP_731002.1">
    <property type="nucleotide sequence ID" value="NM_169103.2"/>
</dbReference>
<dbReference type="SMR" id="Q7K1V5"/>
<dbReference type="BioGRID" id="65919">
    <property type="interactions" value="37"/>
</dbReference>
<dbReference type="FunCoup" id="Q7K1V5">
    <property type="interactions" value="1016"/>
</dbReference>
<dbReference type="IntAct" id="Q7K1V5">
    <property type="interactions" value="58"/>
</dbReference>
<dbReference type="STRING" id="7227.FBpp0078273"/>
<dbReference type="PaxDb" id="7227-FBpp0078273"/>
<dbReference type="DNASU" id="40714"/>
<dbReference type="EnsemblMetazoa" id="FBtr0078624">
    <property type="protein sequence ID" value="FBpp0078273"/>
    <property type="gene ID" value="FBgn0037374"/>
</dbReference>
<dbReference type="EnsemblMetazoa" id="FBtr0078625">
    <property type="protein sequence ID" value="FBpp0078274"/>
    <property type="gene ID" value="FBgn0037374"/>
</dbReference>
<dbReference type="GeneID" id="40714"/>
<dbReference type="KEGG" id="dme:Dmel_CG10978"/>
<dbReference type="UCSC" id="CG10978-RA">
    <property type="organism name" value="d. melanogaster"/>
</dbReference>
<dbReference type="AGR" id="FB:FBgn0037374"/>
<dbReference type="CTD" id="40714"/>
<dbReference type="FlyBase" id="FBgn0037374">
    <property type="gene designation" value="jagn"/>
</dbReference>
<dbReference type="VEuPathDB" id="VectorBase:FBgn0037374"/>
<dbReference type="eggNOG" id="KOG4054">
    <property type="taxonomic scope" value="Eukaryota"/>
</dbReference>
<dbReference type="GeneTree" id="ENSGT00390000005596"/>
<dbReference type="HOGENOM" id="CLU_121621_0_0_1"/>
<dbReference type="InParanoid" id="Q7K1V5"/>
<dbReference type="OMA" id="PYGVLWY"/>
<dbReference type="OrthoDB" id="8914197at2759"/>
<dbReference type="PhylomeDB" id="Q7K1V5"/>
<dbReference type="BioGRID-ORCS" id="40714">
    <property type="hits" value="0 hits in 1 CRISPR screen"/>
</dbReference>
<dbReference type="ChiTaRS" id="jagn">
    <property type="organism name" value="fly"/>
</dbReference>
<dbReference type="GenomeRNAi" id="40714"/>
<dbReference type="PRO" id="PR:Q7K1V5"/>
<dbReference type="Proteomes" id="UP000000803">
    <property type="component" value="Chromosome 3R"/>
</dbReference>
<dbReference type="Bgee" id="FBgn0037374">
    <property type="expression patterns" value="Expressed in embryonic/larval hemocyte (Drosophila) and 194 other cell types or tissues"/>
</dbReference>
<dbReference type="ExpressionAtlas" id="Q7K1V5">
    <property type="expression patterns" value="baseline and differential"/>
</dbReference>
<dbReference type="GO" id="GO:0005789">
    <property type="term" value="C:endoplasmic reticulum membrane"/>
    <property type="evidence" value="ECO:0000314"/>
    <property type="project" value="UniProtKB"/>
</dbReference>
<dbReference type="GO" id="GO:0022416">
    <property type="term" value="P:chaeta development"/>
    <property type="evidence" value="ECO:0000315"/>
    <property type="project" value="UniProtKB"/>
</dbReference>
<dbReference type="GO" id="GO:0008407">
    <property type="term" value="P:chaeta morphogenesis"/>
    <property type="evidence" value="ECO:0000315"/>
    <property type="project" value="FlyBase"/>
</dbReference>
<dbReference type="GO" id="GO:0007029">
    <property type="term" value="P:endoplasmic reticulum organization"/>
    <property type="evidence" value="ECO:0000315"/>
    <property type="project" value="UniProtKB"/>
</dbReference>
<dbReference type="GO" id="GO:0051686">
    <property type="term" value="P:establishment of ER localization"/>
    <property type="evidence" value="ECO:0000315"/>
    <property type="project" value="FlyBase"/>
</dbReference>
<dbReference type="GO" id="GO:0006887">
    <property type="term" value="P:exocytosis"/>
    <property type="evidence" value="ECO:0000315"/>
    <property type="project" value="UniProtKB"/>
</dbReference>
<dbReference type="GO" id="GO:0001555">
    <property type="term" value="P:oocyte growth"/>
    <property type="evidence" value="ECO:0000315"/>
    <property type="project" value="UniProtKB"/>
</dbReference>
<dbReference type="GO" id="GO:0016192">
    <property type="term" value="P:vesicle-mediated transport"/>
    <property type="evidence" value="ECO:0000318"/>
    <property type="project" value="GO_Central"/>
</dbReference>
<dbReference type="GO" id="GO:0007296">
    <property type="term" value="P:vitellogenesis"/>
    <property type="evidence" value="ECO:0000315"/>
    <property type="project" value="FlyBase"/>
</dbReference>
<dbReference type="InterPro" id="IPR009787">
    <property type="entry name" value="Jagunal"/>
</dbReference>
<dbReference type="PANTHER" id="PTHR20955">
    <property type="entry name" value="PROTEIN JAGUNAL HOMOLOG 1"/>
    <property type="match status" value="1"/>
</dbReference>
<dbReference type="PANTHER" id="PTHR20955:SF1">
    <property type="entry name" value="PROTEIN JAGUNAL HOMOLOG 1"/>
    <property type="match status" value="1"/>
</dbReference>
<dbReference type="Pfam" id="PF07086">
    <property type="entry name" value="Jagunal"/>
    <property type="match status" value="1"/>
</dbReference>
<reference key="1">
    <citation type="journal article" date="2000" name="Science">
        <title>The genome sequence of Drosophila melanogaster.</title>
        <authorList>
            <person name="Adams M.D."/>
            <person name="Celniker S.E."/>
            <person name="Holt R.A."/>
            <person name="Evans C.A."/>
            <person name="Gocayne J.D."/>
            <person name="Amanatides P.G."/>
            <person name="Scherer S.E."/>
            <person name="Li P.W."/>
            <person name="Hoskins R.A."/>
            <person name="Galle R.F."/>
            <person name="George R.A."/>
            <person name="Lewis S.E."/>
            <person name="Richards S."/>
            <person name="Ashburner M."/>
            <person name="Henderson S.N."/>
            <person name="Sutton G.G."/>
            <person name="Wortman J.R."/>
            <person name="Yandell M.D."/>
            <person name="Zhang Q."/>
            <person name="Chen L.X."/>
            <person name="Brandon R.C."/>
            <person name="Rogers Y.-H.C."/>
            <person name="Blazej R.G."/>
            <person name="Champe M."/>
            <person name="Pfeiffer B.D."/>
            <person name="Wan K.H."/>
            <person name="Doyle C."/>
            <person name="Baxter E.G."/>
            <person name="Helt G."/>
            <person name="Nelson C.R."/>
            <person name="Miklos G.L.G."/>
            <person name="Abril J.F."/>
            <person name="Agbayani A."/>
            <person name="An H.-J."/>
            <person name="Andrews-Pfannkoch C."/>
            <person name="Baldwin D."/>
            <person name="Ballew R.M."/>
            <person name="Basu A."/>
            <person name="Baxendale J."/>
            <person name="Bayraktaroglu L."/>
            <person name="Beasley E.M."/>
            <person name="Beeson K.Y."/>
            <person name="Benos P.V."/>
            <person name="Berman B.P."/>
            <person name="Bhandari D."/>
            <person name="Bolshakov S."/>
            <person name="Borkova D."/>
            <person name="Botchan M.R."/>
            <person name="Bouck J."/>
            <person name="Brokstein P."/>
            <person name="Brottier P."/>
            <person name="Burtis K.C."/>
            <person name="Busam D.A."/>
            <person name="Butler H."/>
            <person name="Cadieu E."/>
            <person name="Center A."/>
            <person name="Chandra I."/>
            <person name="Cherry J.M."/>
            <person name="Cawley S."/>
            <person name="Dahlke C."/>
            <person name="Davenport L.B."/>
            <person name="Davies P."/>
            <person name="de Pablos B."/>
            <person name="Delcher A."/>
            <person name="Deng Z."/>
            <person name="Mays A.D."/>
            <person name="Dew I."/>
            <person name="Dietz S.M."/>
            <person name="Dodson K."/>
            <person name="Doup L.E."/>
            <person name="Downes M."/>
            <person name="Dugan-Rocha S."/>
            <person name="Dunkov B.C."/>
            <person name="Dunn P."/>
            <person name="Durbin K.J."/>
            <person name="Evangelista C.C."/>
            <person name="Ferraz C."/>
            <person name="Ferriera S."/>
            <person name="Fleischmann W."/>
            <person name="Fosler C."/>
            <person name="Gabrielian A.E."/>
            <person name="Garg N.S."/>
            <person name="Gelbart W.M."/>
            <person name="Glasser K."/>
            <person name="Glodek A."/>
            <person name="Gong F."/>
            <person name="Gorrell J.H."/>
            <person name="Gu Z."/>
            <person name="Guan P."/>
            <person name="Harris M."/>
            <person name="Harris N.L."/>
            <person name="Harvey D.A."/>
            <person name="Heiman T.J."/>
            <person name="Hernandez J.R."/>
            <person name="Houck J."/>
            <person name="Hostin D."/>
            <person name="Houston K.A."/>
            <person name="Howland T.J."/>
            <person name="Wei M.-H."/>
            <person name="Ibegwam C."/>
            <person name="Jalali M."/>
            <person name="Kalush F."/>
            <person name="Karpen G.H."/>
            <person name="Ke Z."/>
            <person name="Kennison J.A."/>
            <person name="Ketchum K.A."/>
            <person name="Kimmel B.E."/>
            <person name="Kodira C.D."/>
            <person name="Kraft C.L."/>
            <person name="Kravitz S."/>
            <person name="Kulp D."/>
            <person name="Lai Z."/>
            <person name="Lasko P."/>
            <person name="Lei Y."/>
            <person name="Levitsky A.A."/>
            <person name="Li J.H."/>
            <person name="Li Z."/>
            <person name="Liang Y."/>
            <person name="Lin X."/>
            <person name="Liu X."/>
            <person name="Mattei B."/>
            <person name="McIntosh T.C."/>
            <person name="McLeod M.P."/>
            <person name="McPherson D."/>
            <person name="Merkulov G."/>
            <person name="Milshina N.V."/>
            <person name="Mobarry C."/>
            <person name="Morris J."/>
            <person name="Moshrefi A."/>
            <person name="Mount S.M."/>
            <person name="Moy M."/>
            <person name="Murphy B."/>
            <person name="Murphy L."/>
            <person name="Muzny D.M."/>
            <person name="Nelson D.L."/>
            <person name="Nelson D.R."/>
            <person name="Nelson K.A."/>
            <person name="Nixon K."/>
            <person name="Nusskern D.R."/>
            <person name="Pacleb J.M."/>
            <person name="Palazzolo M."/>
            <person name="Pittman G.S."/>
            <person name="Pan S."/>
            <person name="Pollard J."/>
            <person name="Puri V."/>
            <person name="Reese M.G."/>
            <person name="Reinert K."/>
            <person name="Remington K."/>
            <person name="Saunders R.D.C."/>
            <person name="Scheeler F."/>
            <person name="Shen H."/>
            <person name="Shue B.C."/>
            <person name="Siden-Kiamos I."/>
            <person name="Simpson M."/>
            <person name="Skupski M.P."/>
            <person name="Smith T.J."/>
            <person name="Spier E."/>
            <person name="Spradling A.C."/>
            <person name="Stapleton M."/>
            <person name="Strong R."/>
            <person name="Sun E."/>
            <person name="Svirskas R."/>
            <person name="Tector C."/>
            <person name="Turner R."/>
            <person name="Venter E."/>
            <person name="Wang A.H."/>
            <person name="Wang X."/>
            <person name="Wang Z.-Y."/>
            <person name="Wassarman D.A."/>
            <person name="Weinstock G.M."/>
            <person name="Weissenbach J."/>
            <person name="Williams S.M."/>
            <person name="Woodage T."/>
            <person name="Worley K.C."/>
            <person name="Wu D."/>
            <person name="Yang S."/>
            <person name="Yao Q.A."/>
            <person name="Ye J."/>
            <person name="Yeh R.-F."/>
            <person name="Zaveri J.S."/>
            <person name="Zhan M."/>
            <person name="Zhang G."/>
            <person name="Zhao Q."/>
            <person name="Zheng L."/>
            <person name="Zheng X.H."/>
            <person name="Zhong F.N."/>
            <person name="Zhong W."/>
            <person name="Zhou X."/>
            <person name="Zhu S.C."/>
            <person name="Zhu X."/>
            <person name="Smith H.O."/>
            <person name="Gibbs R.A."/>
            <person name="Myers E.W."/>
            <person name="Rubin G.M."/>
            <person name="Venter J.C."/>
        </authorList>
    </citation>
    <scope>NUCLEOTIDE SEQUENCE [LARGE SCALE GENOMIC DNA]</scope>
    <source>
        <strain>Berkeley</strain>
    </source>
</reference>
<reference key="2">
    <citation type="journal article" date="2002" name="Genome Biol.">
        <title>Annotation of the Drosophila melanogaster euchromatic genome: a systematic review.</title>
        <authorList>
            <person name="Misra S."/>
            <person name="Crosby M.A."/>
            <person name="Mungall C.J."/>
            <person name="Matthews B.B."/>
            <person name="Campbell K.S."/>
            <person name="Hradecky P."/>
            <person name="Huang Y."/>
            <person name="Kaminker J.S."/>
            <person name="Millburn G.H."/>
            <person name="Prochnik S.E."/>
            <person name="Smith C.D."/>
            <person name="Tupy J.L."/>
            <person name="Whitfield E.J."/>
            <person name="Bayraktaroglu L."/>
            <person name="Berman B.P."/>
            <person name="Bettencourt B.R."/>
            <person name="Celniker S.E."/>
            <person name="de Grey A.D.N.J."/>
            <person name="Drysdale R.A."/>
            <person name="Harris N.L."/>
            <person name="Richter J."/>
            <person name="Russo S."/>
            <person name="Schroeder A.J."/>
            <person name="Shu S.Q."/>
            <person name="Stapleton M."/>
            <person name="Yamada C."/>
            <person name="Ashburner M."/>
            <person name="Gelbart W.M."/>
            <person name="Rubin G.M."/>
            <person name="Lewis S.E."/>
        </authorList>
    </citation>
    <scope>GENOME REANNOTATION</scope>
    <source>
        <strain>Berkeley</strain>
    </source>
</reference>
<reference key="3">
    <citation type="journal article" date="2002" name="Genome Biol.">
        <title>A Drosophila full-length cDNA resource.</title>
        <authorList>
            <person name="Stapleton M."/>
            <person name="Carlson J.W."/>
            <person name="Brokstein P."/>
            <person name="Yu C."/>
            <person name="Champe M."/>
            <person name="George R.A."/>
            <person name="Guarin H."/>
            <person name="Kronmiller B."/>
            <person name="Pacleb J.M."/>
            <person name="Park S."/>
            <person name="Wan K.H."/>
            <person name="Rubin G.M."/>
            <person name="Celniker S.E."/>
        </authorList>
    </citation>
    <scope>NUCLEOTIDE SEQUENCE [LARGE SCALE MRNA]</scope>
    <source>
        <strain>Berkeley</strain>
        <tissue>Embryo</tissue>
    </source>
</reference>
<reference key="4">
    <citation type="journal article" date="2007" name="J. Cell Biol.">
        <title>Jagunal is required for reorganizing the endoplasmic reticulum during Drosophila oogenesis.</title>
        <authorList>
            <person name="Lee S."/>
            <person name="Cooley L."/>
        </authorList>
    </citation>
    <scope>FUNCTION</scope>
    <scope>MUTAGENESIS OF ASP-16</scope>
    <scope>SUBCELLULAR LOCATION</scope>
    <scope>DISRUPTION PHENOTYPE</scope>
</reference>
<comment type="function">
    <text evidence="2">Required for endoplasmic reticulum organization and proper vesicular traffic during vitellogenesis. Required for oocyte and bristle growth.</text>
</comment>
<comment type="subcellular location">
    <subcellularLocation>
        <location evidence="2">Endoplasmic reticulum membrane</location>
        <topology evidence="2">Multi-pass membrane protein</topology>
    </subcellularLocation>
</comment>
<comment type="disruption phenotype">
    <text evidence="2">Mutants can't increase the size of their oocyte during oogenesis.</text>
</comment>
<comment type="miscellaneous">
    <text evidence="5">'Jagunal' means 'small egg'.</text>
</comment>
<comment type="similarity">
    <text evidence="4">Belongs to the jagunal family.</text>
</comment>
<organism>
    <name type="scientific">Drosophila melanogaster</name>
    <name type="common">Fruit fly</name>
    <dbReference type="NCBI Taxonomy" id="7227"/>
    <lineage>
        <taxon>Eukaryota</taxon>
        <taxon>Metazoa</taxon>
        <taxon>Ecdysozoa</taxon>
        <taxon>Arthropoda</taxon>
        <taxon>Hexapoda</taxon>
        <taxon>Insecta</taxon>
        <taxon>Pterygota</taxon>
        <taxon>Neoptera</taxon>
        <taxon>Endopterygota</taxon>
        <taxon>Diptera</taxon>
        <taxon>Brachycera</taxon>
        <taxon>Muscomorpha</taxon>
        <taxon>Ephydroidea</taxon>
        <taxon>Drosophilidae</taxon>
        <taxon>Drosophila</taxon>
        <taxon>Sophophora</taxon>
    </lineage>
</organism>
<protein>
    <recommendedName>
        <fullName evidence="3">Protein jagunal</fullName>
    </recommendedName>
</protein>
<feature type="chain" id="PRO_0000313615" description="Protein jagunal">
    <location>
        <begin position="1"/>
        <end position="197"/>
    </location>
</feature>
<feature type="topological domain" description="Cytoplasmic" evidence="1">
    <location>
        <begin position="1"/>
        <end position="39"/>
    </location>
</feature>
<feature type="transmembrane region" description="Helical" evidence="1">
    <location>
        <begin position="40"/>
        <end position="60"/>
    </location>
</feature>
<feature type="topological domain" description="Lumenal" evidence="1">
    <location>
        <begin position="61"/>
        <end position="78"/>
    </location>
</feature>
<feature type="transmembrane region" description="Helical" evidence="1">
    <location>
        <begin position="79"/>
        <end position="99"/>
    </location>
</feature>
<feature type="topological domain" description="Cytoplasmic" evidence="1">
    <location>
        <begin position="100"/>
        <end position="109"/>
    </location>
</feature>
<feature type="transmembrane region" description="Helical" evidence="1">
    <location>
        <begin position="110"/>
        <end position="130"/>
    </location>
</feature>
<feature type="topological domain" description="Lumenal" evidence="1">
    <location>
        <begin position="131"/>
        <end position="159"/>
    </location>
</feature>
<feature type="transmembrane region" description="Helical" evidence="1">
    <location>
        <begin position="160"/>
        <end position="180"/>
    </location>
</feature>
<feature type="topological domain" description="Cytoplasmic" evidence="1">
    <location>
        <begin position="181"/>
        <end position="197"/>
    </location>
</feature>
<feature type="mutagenesis site" description="Semi-lethal." evidence="2">
    <original>D</original>
    <variation>N</variation>
    <location>
        <position position="16"/>
    </location>
</feature>
<proteinExistence type="evidence at protein level"/>
<sequence length="197" mass="23036">MATRGGPMVAGTDGNDFEFRQRVAGTYQISLLNKSRLKYCIFFHALLFFVMLAKLTSDILDHLDIFVLEIEELEVPPPLWWEYVWAASLLTSFLGLSAARGNKVREMQKYMVAILLFAILPLFYCFAYYFSDVWEFATLDKSVELDETDIFVWRGYPYGVFWYAFCFVGFQVHGFTLYFAYNLVKAWKARTATRKFQ</sequence>
<name>JAGN_DROME</name>
<gene>
    <name evidence="3 6" type="primary">jagn</name>
    <name type="ORF">CG10978</name>
</gene>
<accession>Q7K1V5</accession>